<keyword id="KW-0342">GTP-binding</keyword>
<keyword id="KW-0496">Mitochondrion</keyword>
<keyword id="KW-0547">Nucleotide-binding</keyword>
<keyword id="KW-1185">Reference proteome</keyword>
<keyword id="KW-0809">Transit peptide</keyword>
<keyword id="KW-0819">tRNA processing</keyword>
<feature type="transit peptide" description="Mitochondrion" evidence="2">
    <location>
        <begin position="1"/>
        <end status="unknown"/>
    </location>
</feature>
<feature type="chain" id="PRO_0000328465" description="tRNA modification GTPase gtpbp3, mitochondrial">
    <location>
        <begin status="unknown"/>
        <end position="512"/>
    </location>
</feature>
<feature type="domain" description="TrmE-type G">
    <location>
        <begin position="246"/>
        <end position="434"/>
    </location>
</feature>
<feature type="binding site" evidence="2">
    <location>
        <begin position="253"/>
        <end position="260"/>
    </location>
    <ligand>
        <name>GTP</name>
        <dbReference type="ChEBI" id="CHEBI:37565"/>
    </ligand>
</feature>
<feature type="binding site" evidence="2">
    <location>
        <begin position="300"/>
        <end position="304"/>
    </location>
    <ligand>
        <name>GTP</name>
        <dbReference type="ChEBI" id="CHEBI:37565"/>
    </ligand>
</feature>
<feature type="binding site" evidence="2">
    <location>
        <begin position="375"/>
        <end position="378"/>
    </location>
    <ligand>
        <name>GTP</name>
        <dbReference type="ChEBI" id="CHEBI:37565"/>
    </ligand>
</feature>
<evidence type="ECO:0000250" key="1"/>
<evidence type="ECO:0000255" key="2"/>
<evidence type="ECO:0000305" key="3"/>
<gene>
    <name type="primary">gtpbp3</name>
    <name type="ORF">DDB_G0270228</name>
</gene>
<comment type="function">
    <text evidence="1">GTPase involved in the 5-carboxymethylaminomethyl modification (mnm(5)s(2)U34) of the wobble uridine base in mitochondrial tRNAs.</text>
</comment>
<comment type="subcellular location">
    <subcellularLocation>
        <location evidence="1">Mitochondrion</location>
    </subcellularLocation>
</comment>
<comment type="similarity">
    <text evidence="3">Belongs to the TRAFAC class TrmE-Era-EngA-EngB-Septin-like GTPase superfamily. TrmE GTPase family.</text>
</comment>
<sequence length="512" mass="58113">MIKRLFCSINKNKIINEPPKLSIIKDTIYNLSSGVGKSGVAIIRVSGPQAETVIRKLIKKSDVDKNEEIKSRYATLSTFYNPKTNEQLDKGMFIWFPSPNSFTGEDVVEFHIHGGRAVIYETMEAIGLIEGTRPSEQGEFTKRAFENGKMDLTQVEGLSDLLDASTSFQKKIALKQMQGSISEFYLSLRKDLIRASAYMEAFIDFGDDAELDPEIVDQSRNRIISIRDKIQQHLNDGKRGERLRDGANIAIVGPPNAGKSSLINLLTNRKASIVSPIAGTTRDIVEVILDIDGYPVIIGDTAGLRNSTNDQIEIEGIEMAKDRFNNSDIKLFLFDSFNLFSQLNQNQNLNSSFNFNEEIKNLFNFIDNETIIIFNKSDLLKQFDNLKEWENLKLNLLDNIKKSNNLNSIQSIEISCNNNENIKDLLNLLKLNLKNLFEIQDKESPLLTRLRYKQHLSDCVESLDRYLYYCEHDVVLASEELRSAILSISEITHSVNIDDLLDIIFKDFCIGK</sequence>
<reference key="1">
    <citation type="journal article" date="2005" name="Nature">
        <title>The genome of the social amoeba Dictyostelium discoideum.</title>
        <authorList>
            <person name="Eichinger L."/>
            <person name="Pachebat J.A."/>
            <person name="Gloeckner G."/>
            <person name="Rajandream M.A."/>
            <person name="Sucgang R."/>
            <person name="Berriman M."/>
            <person name="Song J."/>
            <person name="Olsen R."/>
            <person name="Szafranski K."/>
            <person name="Xu Q."/>
            <person name="Tunggal B."/>
            <person name="Kummerfeld S."/>
            <person name="Madera M."/>
            <person name="Konfortov B.A."/>
            <person name="Rivero F."/>
            <person name="Bankier A.T."/>
            <person name="Lehmann R."/>
            <person name="Hamlin N."/>
            <person name="Davies R."/>
            <person name="Gaudet P."/>
            <person name="Fey P."/>
            <person name="Pilcher K."/>
            <person name="Chen G."/>
            <person name="Saunders D."/>
            <person name="Sodergren E.J."/>
            <person name="Davis P."/>
            <person name="Kerhornou A."/>
            <person name="Nie X."/>
            <person name="Hall N."/>
            <person name="Anjard C."/>
            <person name="Hemphill L."/>
            <person name="Bason N."/>
            <person name="Farbrother P."/>
            <person name="Desany B."/>
            <person name="Just E."/>
            <person name="Morio T."/>
            <person name="Rost R."/>
            <person name="Churcher C.M."/>
            <person name="Cooper J."/>
            <person name="Haydock S."/>
            <person name="van Driessche N."/>
            <person name="Cronin A."/>
            <person name="Goodhead I."/>
            <person name="Muzny D.M."/>
            <person name="Mourier T."/>
            <person name="Pain A."/>
            <person name="Lu M."/>
            <person name="Harper D."/>
            <person name="Lindsay R."/>
            <person name="Hauser H."/>
            <person name="James K.D."/>
            <person name="Quiles M."/>
            <person name="Madan Babu M."/>
            <person name="Saito T."/>
            <person name="Buchrieser C."/>
            <person name="Wardroper A."/>
            <person name="Felder M."/>
            <person name="Thangavelu M."/>
            <person name="Johnson D."/>
            <person name="Knights A."/>
            <person name="Loulseged H."/>
            <person name="Mungall K.L."/>
            <person name="Oliver K."/>
            <person name="Price C."/>
            <person name="Quail M.A."/>
            <person name="Urushihara H."/>
            <person name="Hernandez J."/>
            <person name="Rabbinowitsch E."/>
            <person name="Steffen D."/>
            <person name="Sanders M."/>
            <person name="Ma J."/>
            <person name="Kohara Y."/>
            <person name="Sharp S."/>
            <person name="Simmonds M.N."/>
            <person name="Spiegler S."/>
            <person name="Tivey A."/>
            <person name="Sugano S."/>
            <person name="White B."/>
            <person name="Walker D."/>
            <person name="Woodward J.R."/>
            <person name="Winckler T."/>
            <person name="Tanaka Y."/>
            <person name="Shaulsky G."/>
            <person name="Schleicher M."/>
            <person name="Weinstock G.M."/>
            <person name="Rosenthal A."/>
            <person name="Cox E.C."/>
            <person name="Chisholm R.L."/>
            <person name="Gibbs R.A."/>
            <person name="Loomis W.F."/>
            <person name="Platzer M."/>
            <person name="Kay R.R."/>
            <person name="Williams J.G."/>
            <person name="Dear P.H."/>
            <person name="Noegel A.A."/>
            <person name="Barrell B.G."/>
            <person name="Kuspa A."/>
        </authorList>
    </citation>
    <scope>NUCLEOTIDE SEQUENCE [LARGE SCALE GENOMIC DNA]</scope>
    <source>
        <strain>AX4</strain>
    </source>
</reference>
<organism>
    <name type="scientific">Dictyostelium discoideum</name>
    <name type="common">Social amoeba</name>
    <dbReference type="NCBI Taxonomy" id="44689"/>
    <lineage>
        <taxon>Eukaryota</taxon>
        <taxon>Amoebozoa</taxon>
        <taxon>Evosea</taxon>
        <taxon>Eumycetozoa</taxon>
        <taxon>Dictyostelia</taxon>
        <taxon>Dictyosteliales</taxon>
        <taxon>Dictyosteliaceae</taxon>
        <taxon>Dictyostelium</taxon>
    </lineage>
</organism>
<proteinExistence type="inferred from homology"/>
<dbReference type="EMBL" id="AAFI02000005">
    <property type="protein sequence ID" value="EAL72464.1"/>
    <property type="molecule type" value="Genomic_DNA"/>
</dbReference>
<dbReference type="RefSeq" id="XP_646629.1">
    <property type="nucleotide sequence ID" value="XM_641537.1"/>
</dbReference>
<dbReference type="SMR" id="Q55C52"/>
<dbReference type="FunCoup" id="Q55C52">
    <property type="interactions" value="365"/>
</dbReference>
<dbReference type="STRING" id="44689.Q55C52"/>
<dbReference type="PaxDb" id="44689-DDB0267051"/>
<dbReference type="EnsemblProtists" id="EAL72464">
    <property type="protein sequence ID" value="EAL72464"/>
    <property type="gene ID" value="DDB_G0270228"/>
</dbReference>
<dbReference type="GeneID" id="8617601"/>
<dbReference type="KEGG" id="ddi:DDB_G0270228"/>
<dbReference type="dictyBase" id="DDB_G0270228">
    <property type="gene designation" value="gtpbp3"/>
</dbReference>
<dbReference type="VEuPathDB" id="AmoebaDB:DDB_G0270228"/>
<dbReference type="eggNOG" id="KOG1191">
    <property type="taxonomic scope" value="Eukaryota"/>
</dbReference>
<dbReference type="HOGENOM" id="CLU_019624_3_1_1"/>
<dbReference type="InParanoid" id="Q55C52"/>
<dbReference type="OMA" id="EFHCHGG"/>
<dbReference type="PhylomeDB" id="Q55C52"/>
<dbReference type="PRO" id="PR:Q55C52"/>
<dbReference type="Proteomes" id="UP000002195">
    <property type="component" value="Chromosome 1"/>
</dbReference>
<dbReference type="GO" id="GO:0005737">
    <property type="term" value="C:cytoplasm"/>
    <property type="evidence" value="ECO:0000318"/>
    <property type="project" value="GO_Central"/>
</dbReference>
<dbReference type="GO" id="GO:0005739">
    <property type="term" value="C:mitochondrion"/>
    <property type="evidence" value="ECO:0000250"/>
    <property type="project" value="dictyBase"/>
</dbReference>
<dbReference type="GO" id="GO:0005525">
    <property type="term" value="F:GTP binding"/>
    <property type="evidence" value="ECO:0007669"/>
    <property type="project" value="UniProtKB-KW"/>
</dbReference>
<dbReference type="GO" id="GO:0003924">
    <property type="term" value="F:GTPase activity"/>
    <property type="evidence" value="ECO:0007669"/>
    <property type="project" value="InterPro"/>
</dbReference>
<dbReference type="GO" id="GO:0070899">
    <property type="term" value="P:mitochondrial tRNA wobble uridine modification"/>
    <property type="evidence" value="ECO:0000250"/>
    <property type="project" value="dictyBase"/>
</dbReference>
<dbReference type="GO" id="GO:0030488">
    <property type="term" value="P:tRNA methylation"/>
    <property type="evidence" value="ECO:0000318"/>
    <property type="project" value="GO_Central"/>
</dbReference>
<dbReference type="GO" id="GO:0002098">
    <property type="term" value="P:tRNA wobble uridine modification"/>
    <property type="evidence" value="ECO:0000318"/>
    <property type="project" value="GO_Central"/>
</dbReference>
<dbReference type="CDD" id="cd04164">
    <property type="entry name" value="trmE"/>
    <property type="match status" value="1"/>
</dbReference>
<dbReference type="CDD" id="cd14858">
    <property type="entry name" value="TrmE_N"/>
    <property type="match status" value="1"/>
</dbReference>
<dbReference type="FunFam" id="3.30.1360.120:FF:000007">
    <property type="entry name" value="tRNA modification GTPase GTPBP3, mitochondrial"/>
    <property type="match status" value="1"/>
</dbReference>
<dbReference type="FunFam" id="3.40.50.300:FF:005898">
    <property type="entry name" value="tRNA modification GTPase gtpbp3, mitochondrial"/>
    <property type="match status" value="1"/>
</dbReference>
<dbReference type="Gene3D" id="3.40.50.300">
    <property type="entry name" value="P-loop containing nucleotide triphosphate hydrolases"/>
    <property type="match status" value="1"/>
</dbReference>
<dbReference type="Gene3D" id="3.30.1360.120">
    <property type="entry name" value="Probable tRNA modification gtpase trme, domain 1"/>
    <property type="match status" value="1"/>
</dbReference>
<dbReference type="Gene3D" id="1.20.120.430">
    <property type="entry name" value="tRNA modification GTPase MnmE domain 2"/>
    <property type="match status" value="1"/>
</dbReference>
<dbReference type="HAMAP" id="MF_00379">
    <property type="entry name" value="GTPase_MnmE"/>
    <property type="match status" value="1"/>
</dbReference>
<dbReference type="InterPro" id="IPR031168">
    <property type="entry name" value="G_TrmE"/>
</dbReference>
<dbReference type="InterPro" id="IPR006073">
    <property type="entry name" value="GTP-bd"/>
</dbReference>
<dbReference type="InterPro" id="IPR018948">
    <property type="entry name" value="GTP-bd_TrmE_N"/>
</dbReference>
<dbReference type="InterPro" id="IPR004520">
    <property type="entry name" value="GTPase_MnmE"/>
</dbReference>
<dbReference type="InterPro" id="IPR027368">
    <property type="entry name" value="MnmE_dom2"/>
</dbReference>
<dbReference type="InterPro" id="IPR025867">
    <property type="entry name" value="MnmE_helical"/>
</dbReference>
<dbReference type="InterPro" id="IPR027417">
    <property type="entry name" value="P-loop_NTPase"/>
</dbReference>
<dbReference type="InterPro" id="IPR005225">
    <property type="entry name" value="Small_GTP-bd"/>
</dbReference>
<dbReference type="InterPro" id="IPR027266">
    <property type="entry name" value="TrmE/GcvT_dom1"/>
</dbReference>
<dbReference type="NCBIfam" id="TIGR00450">
    <property type="entry name" value="mnmE_trmE_thdF"/>
    <property type="match status" value="1"/>
</dbReference>
<dbReference type="NCBIfam" id="NF003661">
    <property type="entry name" value="PRK05291.1-3"/>
    <property type="match status" value="1"/>
</dbReference>
<dbReference type="NCBIfam" id="TIGR00231">
    <property type="entry name" value="small_GTP"/>
    <property type="match status" value="1"/>
</dbReference>
<dbReference type="PANTHER" id="PTHR42714">
    <property type="entry name" value="TRNA MODIFICATION GTPASE GTPBP3"/>
    <property type="match status" value="1"/>
</dbReference>
<dbReference type="PANTHER" id="PTHR42714:SF2">
    <property type="entry name" value="TRNA MODIFICATION GTPASE GTPBP3, MITOCHONDRIAL"/>
    <property type="match status" value="1"/>
</dbReference>
<dbReference type="Pfam" id="PF01926">
    <property type="entry name" value="MMR_HSR1"/>
    <property type="match status" value="1"/>
</dbReference>
<dbReference type="Pfam" id="PF12631">
    <property type="entry name" value="MnmE_helical"/>
    <property type="match status" value="1"/>
</dbReference>
<dbReference type="Pfam" id="PF10396">
    <property type="entry name" value="TrmE_N"/>
    <property type="match status" value="1"/>
</dbReference>
<dbReference type="SUPFAM" id="SSF52540">
    <property type="entry name" value="P-loop containing nucleoside triphosphate hydrolases"/>
    <property type="match status" value="1"/>
</dbReference>
<dbReference type="SUPFAM" id="SSF116878">
    <property type="entry name" value="TrmE connector domain"/>
    <property type="match status" value="1"/>
</dbReference>
<dbReference type="PROSITE" id="PS51709">
    <property type="entry name" value="G_TRME"/>
    <property type="match status" value="1"/>
</dbReference>
<name>GTPB3_DICDI</name>
<accession>Q55C52</accession>
<protein>
    <recommendedName>
        <fullName>tRNA modification GTPase gtpbp3, mitochondrial</fullName>
    </recommendedName>
    <alternativeName>
        <fullName>GTP-binding protein 3</fullName>
    </alternativeName>
</protein>